<proteinExistence type="inferred from homology"/>
<accession>Q3MFC1</accession>
<comment type="function">
    <text evidence="1">One of the primary rRNA binding proteins, it binds directly near the 3'-end of the 23S rRNA, where it nucleates assembly of the 50S subunit.</text>
</comment>
<comment type="subunit">
    <text evidence="1">Part of the 50S ribosomal subunit. Forms a cluster with proteins L14 and L19.</text>
</comment>
<comment type="similarity">
    <text evidence="1">Belongs to the universal ribosomal protein uL3 family.</text>
</comment>
<reference key="1">
    <citation type="journal article" date="2014" name="Stand. Genomic Sci.">
        <title>Complete genome sequence of Anabaena variabilis ATCC 29413.</title>
        <authorList>
            <person name="Thiel T."/>
            <person name="Pratte B.S."/>
            <person name="Zhong J."/>
            <person name="Goodwin L."/>
            <person name="Copeland A."/>
            <person name="Lucas S."/>
            <person name="Han C."/>
            <person name="Pitluck S."/>
            <person name="Land M.L."/>
            <person name="Kyrpides N.C."/>
            <person name="Woyke T."/>
        </authorList>
    </citation>
    <scope>NUCLEOTIDE SEQUENCE [LARGE SCALE GENOMIC DNA]</scope>
    <source>
        <strain>ATCC 29413 / PCC 7937</strain>
    </source>
</reference>
<feature type="chain" id="PRO_0000241306" description="Large ribosomal subunit protein uL3">
    <location>
        <begin position="1"/>
        <end position="211"/>
    </location>
</feature>
<feature type="region of interest" description="Disordered" evidence="2">
    <location>
        <begin position="122"/>
        <end position="157"/>
    </location>
</feature>
<sequence length="211" mass="22074">MSVGILGTKLGMTQIFDEAGVAIPVTVVQVGPCVVTQVKSKQTDGYAAIQVGYGEVKPKALNRPLLGHLAKSSAPALRHLKEYHTDSSSDYALGQEIKADIFSAGELVDVIGTSIGRGFAGNQKRNNFGRGPMSHGSKNHRAPGSIGAGTTPGRVYPGKRMAGRLGGTRVTIRKLTVIRVDAERNLLLIKGAVPGKPGSLLSIVPAKKVGK</sequence>
<organism>
    <name type="scientific">Trichormus variabilis (strain ATCC 29413 / PCC 7937)</name>
    <name type="common">Anabaena variabilis</name>
    <dbReference type="NCBI Taxonomy" id="240292"/>
    <lineage>
        <taxon>Bacteria</taxon>
        <taxon>Bacillati</taxon>
        <taxon>Cyanobacteriota</taxon>
        <taxon>Cyanophyceae</taxon>
        <taxon>Nostocales</taxon>
        <taxon>Nostocaceae</taxon>
        <taxon>Trichormus</taxon>
    </lineage>
</organism>
<name>RL3_TRIV2</name>
<evidence type="ECO:0000255" key="1">
    <source>
        <dbReference type="HAMAP-Rule" id="MF_01325"/>
    </source>
</evidence>
<evidence type="ECO:0000256" key="2">
    <source>
        <dbReference type="SAM" id="MobiDB-lite"/>
    </source>
</evidence>
<evidence type="ECO:0000305" key="3"/>
<keyword id="KW-0687">Ribonucleoprotein</keyword>
<keyword id="KW-0689">Ribosomal protein</keyword>
<keyword id="KW-0694">RNA-binding</keyword>
<keyword id="KW-0699">rRNA-binding</keyword>
<dbReference type="EMBL" id="CP000117">
    <property type="protein sequence ID" value="ABA20315.1"/>
    <property type="molecule type" value="Genomic_DNA"/>
</dbReference>
<dbReference type="SMR" id="Q3MFC1"/>
<dbReference type="STRING" id="240292.Ava_0691"/>
<dbReference type="KEGG" id="ava:Ava_0691"/>
<dbReference type="eggNOG" id="COG0087">
    <property type="taxonomic scope" value="Bacteria"/>
</dbReference>
<dbReference type="HOGENOM" id="CLU_044142_4_1_3"/>
<dbReference type="Proteomes" id="UP000002533">
    <property type="component" value="Chromosome"/>
</dbReference>
<dbReference type="GO" id="GO:0022625">
    <property type="term" value="C:cytosolic large ribosomal subunit"/>
    <property type="evidence" value="ECO:0007669"/>
    <property type="project" value="TreeGrafter"/>
</dbReference>
<dbReference type="GO" id="GO:0019843">
    <property type="term" value="F:rRNA binding"/>
    <property type="evidence" value="ECO:0007669"/>
    <property type="project" value="UniProtKB-UniRule"/>
</dbReference>
<dbReference type="GO" id="GO:0003735">
    <property type="term" value="F:structural constituent of ribosome"/>
    <property type="evidence" value="ECO:0007669"/>
    <property type="project" value="InterPro"/>
</dbReference>
<dbReference type="GO" id="GO:0006412">
    <property type="term" value="P:translation"/>
    <property type="evidence" value="ECO:0007669"/>
    <property type="project" value="UniProtKB-UniRule"/>
</dbReference>
<dbReference type="FunFam" id="3.30.160.810:FF:000001">
    <property type="entry name" value="50S ribosomal protein L3"/>
    <property type="match status" value="1"/>
</dbReference>
<dbReference type="FunFam" id="2.40.30.10:FF:000065">
    <property type="entry name" value="50S ribosomal protein L3, chloroplastic"/>
    <property type="match status" value="1"/>
</dbReference>
<dbReference type="Gene3D" id="3.30.160.810">
    <property type="match status" value="1"/>
</dbReference>
<dbReference type="Gene3D" id="2.40.30.10">
    <property type="entry name" value="Translation factors"/>
    <property type="match status" value="1"/>
</dbReference>
<dbReference type="HAMAP" id="MF_01325_B">
    <property type="entry name" value="Ribosomal_uL3_B"/>
    <property type="match status" value="1"/>
</dbReference>
<dbReference type="InterPro" id="IPR000597">
    <property type="entry name" value="Ribosomal_uL3"/>
</dbReference>
<dbReference type="InterPro" id="IPR019927">
    <property type="entry name" value="Ribosomal_uL3_bac/org-type"/>
</dbReference>
<dbReference type="InterPro" id="IPR019926">
    <property type="entry name" value="Ribosomal_uL3_CS"/>
</dbReference>
<dbReference type="InterPro" id="IPR009000">
    <property type="entry name" value="Transl_B-barrel_sf"/>
</dbReference>
<dbReference type="NCBIfam" id="TIGR03625">
    <property type="entry name" value="L3_bact"/>
    <property type="match status" value="1"/>
</dbReference>
<dbReference type="PANTHER" id="PTHR11229">
    <property type="entry name" value="50S RIBOSOMAL PROTEIN L3"/>
    <property type="match status" value="1"/>
</dbReference>
<dbReference type="PANTHER" id="PTHR11229:SF16">
    <property type="entry name" value="LARGE RIBOSOMAL SUBUNIT PROTEIN UL3C"/>
    <property type="match status" value="1"/>
</dbReference>
<dbReference type="Pfam" id="PF00297">
    <property type="entry name" value="Ribosomal_L3"/>
    <property type="match status" value="1"/>
</dbReference>
<dbReference type="SUPFAM" id="SSF50447">
    <property type="entry name" value="Translation proteins"/>
    <property type="match status" value="1"/>
</dbReference>
<dbReference type="PROSITE" id="PS00474">
    <property type="entry name" value="RIBOSOMAL_L3"/>
    <property type="match status" value="1"/>
</dbReference>
<gene>
    <name evidence="1" type="primary">rplC</name>
    <name evidence="1" type="synonym">rpl3</name>
    <name type="ordered locus">Ava_0691</name>
</gene>
<protein>
    <recommendedName>
        <fullName evidence="1">Large ribosomal subunit protein uL3</fullName>
    </recommendedName>
    <alternativeName>
        <fullName evidence="3">50S ribosomal protein L3</fullName>
    </alternativeName>
</protein>